<proteinExistence type="evidence at protein level"/>
<evidence type="ECO:0000255" key="1">
    <source>
        <dbReference type="HAMAP-Rule" id="MF_00580"/>
    </source>
</evidence>
<evidence type="ECO:0000305" key="2"/>
<accession>P0A014</accession>
<accession>Q08841</accession>
<dbReference type="EMBL" id="D14711">
    <property type="protein sequence ID" value="BAA03532.1"/>
    <property type="molecule type" value="Genomic_DNA"/>
</dbReference>
<dbReference type="PIR" id="JN0600">
    <property type="entry name" value="JN0600"/>
</dbReference>
<dbReference type="RefSeq" id="WP_000917289.1">
    <property type="nucleotide sequence ID" value="NZ_WYDB01000007.1"/>
</dbReference>
<dbReference type="SMR" id="P0A014"/>
<dbReference type="GeneID" id="98346332"/>
<dbReference type="OMA" id="EDFLIMR"/>
<dbReference type="OrthoDB" id="9806791at2"/>
<dbReference type="GO" id="GO:0005737">
    <property type="term" value="C:cytoplasm"/>
    <property type="evidence" value="ECO:0007669"/>
    <property type="project" value="UniProtKB-SubCell"/>
</dbReference>
<dbReference type="GO" id="GO:0005524">
    <property type="term" value="F:ATP binding"/>
    <property type="evidence" value="ECO:0007669"/>
    <property type="project" value="InterPro"/>
</dbReference>
<dbReference type="GO" id="GO:0046872">
    <property type="term" value="F:metal ion binding"/>
    <property type="evidence" value="ECO:0007669"/>
    <property type="project" value="TreeGrafter"/>
</dbReference>
<dbReference type="GO" id="GO:0044183">
    <property type="term" value="F:protein folding chaperone"/>
    <property type="evidence" value="ECO:0007669"/>
    <property type="project" value="InterPro"/>
</dbReference>
<dbReference type="GO" id="GO:0051087">
    <property type="term" value="F:protein-folding chaperone binding"/>
    <property type="evidence" value="ECO:0007669"/>
    <property type="project" value="TreeGrafter"/>
</dbReference>
<dbReference type="GO" id="GO:0051082">
    <property type="term" value="F:unfolded protein binding"/>
    <property type="evidence" value="ECO:0007669"/>
    <property type="project" value="TreeGrafter"/>
</dbReference>
<dbReference type="GO" id="GO:0051085">
    <property type="term" value="P:chaperone cofactor-dependent protein refolding"/>
    <property type="evidence" value="ECO:0007669"/>
    <property type="project" value="TreeGrafter"/>
</dbReference>
<dbReference type="CDD" id="cd00320">
    <property type="entry name" value="cpn10"/>
    <property type="match status" value="1"/>
</dbReference>
<dbReference type="FunFam" id="2.30.33.40:FF:000001">
    <property type="entry name" value="10 kDa chaperonin"/>
    <property type="match status" value="1"/>
</dbReference>
<dbReference type="Gene3D" id="2.30.33.40">
    <property type="entry name" value="GroES chaperonin"/>
    <property type="match status" value="1"/>
</dbReference>
<dbReference type="HAMAP" id="MF_00580">
    <property type="entry name" value="CH10"/>
    <property type="match status" value="1"/>
</dbReference>
<dbReference type="InterPro" id="IPR020818">
    <property type="entry name" value="Chaperonin_GroES"/>
</dbReference>
<dbReference type="InterPro" id="IPR037124">
    <property type="entry name" value="Chaperonin_GroES_sf"/>
</dbReference>
<dbReference type="InterPro" id="IPR018369">
    <property type="entry name" value="Chaprnonin_Cpn10_CS"/>
</dbReference>
<dbReference type="InterPro" id="IPR011032">
    <property type="entry name" value="GroES-like_sf"/>
</dbReference>
<dbReference type="NCBIfam" id="NF001531">
    <property type="entry name" value="PRK00364.2-2"/>
    <property type="match status" value="1"/>
</dbReference>
<dbReference type="NCBIfam" id="NF001532">
    <property type="entry name" value="PRK00364.2-3"/>
    <property type="match status" value="1"/>
</dbReference>
<dbReference type="NCBIfam" id="NF001533">
    <property type="entry name" value="PRK00364.2-4"/>
    <property type="match status" value="1"/>
</dbReference>
<dbReference type="NCBIfam" id="NF001534">
    <property type="entry name" value="PRK00364.2-5"/>
    <property type="match status" value="1"/>
</dbReference>
<dbReference type="PANTHER" id="PTHR10772">
    <property type="entry name" value="10 KDA HEAT SHOCK PROTEIN"/>
    <property type="match status" value="1"/>
</dbReference>
<dbReference type="PANTHER" id="PTHR10772:SF58">
    <property type="entry name" value="CO-CHAPERONIN GROES"/>
    <property type="match status" value="1"/>
</dbReference>
<dbReference type="Pfam" id="PF00166">
    <property type="entry name" value="Cpn10"/>
    <property type="match status" value="1"/>
</dbReference>
<dbReference type="PRINTS" id="PR00297">
    <property type="entry name" value="CHAPERONIN10"/>
</dbReference>
<dbReference type="SMART" id="SM00883">
    <property type="entry name" value="Cpn10"/>
    <property type="match status" value="1"/>
</dbReference>
<dbReference type="SUPFAM" id="SSF50129">
    <property type="entry name" value="GroES-like"/>
    <property type="match status" value="1"/>
</dbReference>
<dbReference type="PROSITE" id="PS00681">
    <property type="entry name" value="CHAPERONINS_CPN10"/>
    <property type="match status" value="1"/>
</dbReference>
<keyword id="KW-0143">Chaperone</keyword>
<keyword id="KW-0963">Cytoplasm</keyword>
<keyword id="KW-0903">Direct protein sequencing</keyword>
<keyword id="KW-0346">Stress response</keyword>
<sequence length="94" mass="10416">MLKPIGNRVIIEKKEQEQTTKSGIVLTDSAKEKSNEGVIVAVGTGRLLNDGTRVTPEVKEGDRVVFQQYAGTEVKRDNETYLVLNEEDILAVIE</sequence>
<protein>
    <recommendedName>
        <fullName evidence="1">Co-chaperonin GroES</fullName>
    </recommendedName>
    <alternativeName>
        <fullName evidence="1">10 kDa chaperonin</fullName>
    </alternativeName>
    <alternativeName>
        <fullName evidence="1">Chaperonin-10</fullName>
        <shortName evidence="1">Cpn10</shortName>
    </alternativeName>
    <alternativeName>
        <fullName>Heat shock protein 10</fullName>
    </alternativeName>
</protein>
<comment type="function">
    <text evidence="1">Together with the chaperonin GroEL, plays an essential role in assisting protein folding. The GroEL-GroES system forms a nano-cage that allows encapsulation of the non-native substrate proteins and provides a physical environment optimized to promote and accelerate protein folding. GroES binds to the apical surface of the GroEL ring, thereby capping the opening of the GroEL channel.</text>
</comment>
<comment type="subunit">
    <text evidence="1">Heptamer of 7 subunits arranged in a ring. Interacts with the chaperonin GroEL.</text>
</comment>
<comment type="subcellular location">
    <subcellularLocation>
        <location evidence="1">Cytoplasm</location>
    </subcellularLocation>
</comment>
<comment type="induction">
    <text>By heat shock.</text>
</comment>
<comment type="similarity">
    <text evidence="1 2">Belongs to the GroES chaperonin family.</text>
</comment>
<name>CH10_STAAU</name>
<feature type="chain" id="PRO_0000174845" description="Co-chaperonin GroES">
    <location>
        <begin position="1"/>
        <end position="94"/>
    </location>
</feature>
<gene>
    <name evidence="1" type="primary">groES</name>
    <name evidence="1" type="synonym">groS</name>
    <name type="synonym">hsp10</name>
</gene>
<organism>
    <name type="scientific">Staphylococcus aureus</name>
    <dbReference type="NCBI Taxonomy" id="1280"/>
    <lineage>
        <taxon>Bacteria</taxon>
        <taxon>Bacillati</taxon>
        <taxon>Bacillota</taxon>
        <taxon>Bacilli</taxon>
        <taxon>Bacillales</taxon>
        <taxon>Staphylococcaceae</taxon>
        <taxon>Staphylococcus</taxon>
    </lineage>
</organism>
<reference key="1">
    <citation type="journal article" date="1993" name="Biochem. Biophys. Res. Commun.">
        <title>Molecular characterization of the gene operon of heat shock proteins HSP60 and HSP10 in methicillin-resistant Staphylococcus aureus.</title>
        <authorList>
            <person name="Ohta T."/>
            <person name="Honda K."/>
            <person name="Kuroda M."/>
            <person name="Saito K."/>
            <person name="Hayashi H."/>
        </authorList>
    </citation>
    <scope>NUCLEOTIDE SEQUENCE [GENOMIC DNA]</scope>
    <scope>PROTEIN SEQUENCE OF 1-34</scope>
    <source>
        <strain>912</strain>
    </source>
</reference>